<keyword id="KW-0131">Cell cycle</keyword>
<keyword id="KW-0132">Cell division</keyword>
<keyword id="KW-0717">Septation</keyword>
<sequence>MEEKKQQNVTIKGTKDGITLHLDDCCSFSELLKELDEKLSTHYYDGDGRSLIEVHVKVGNRYLTEVQQEEIRTLIRNKKNLVVDSIESDVITKEEAIAWKEETEIVPISKIVRSGQVLHVKGNLLLIGDVNPGGTVIAGGNIFVVGSLRGIAHAGYYGDSDAVIAASVMNPMQLRISDVAMRAPEEKEDGAEAAECAYINENNHIVVDRLQLLTHLRPNLTKLERGIV</sequence>
<evidence type="ECO:0000255" key="1">
    <source>
        <dbReference type="HAMAP-Rule" id="MF_00267"/>
    </source>
</evidence>
<accession>P62208</accession>
<reference key="1">
    <citation type="journal article" date="2004" name="Nucleic Acids Res.">
        <title>The genome sequence of Bacillus cereus ATCC 10987 reveals metabolic adaptations and a large plasmid related to Bacillus anthracis pXO1.</title>
        <authorList>
            <person name="Rasko D.A."/>
            <person name="Ravel J."/>
            <person name="Oekstad O.A."/>
            <person name="Helgason E."/>
            <person name="Cer R.Z."/>
            <person name="Jiang L."/>
            <person name="Shores K.A."/>
            <person name="Fouts D.E."/>
            <person name="Tourasse N.J."/>
            <person name="Angiuoli S.V."/>
            <person name="Kolonay J.F."/>
            <person name="Nelson W.C."/>
            <person name="Kolstoe A.-B."/>
            <person name="Fraser C.M."/>
            <person name="Read T.D."/>
        </authorList>
    </citation>
    <scope>NUCLEOTIDE SEQUENCE [LARGE SCALE GENOMIC DNA]</scope>
    <source>
        <strain>ATCC 10987 / NRS 248</strain>
    </source>
</reference>
<name>MINC_BACC1</name>
<proteinExistence type="inferred from homology"/>
<dbReference type="EMBL" id="AE017194">
    <property type="protein sequence ID" value="AAS43442.1"/>
    <property type="molecule type" value="Genomic_DNA"/>
</dbReference>
<dbReference type="SMR" id="P62208"/>
<dbReference type="KEGG" id="bca:BCE_4541"/>
<dbReference type="HOGENOM" id="CLU_048711_1_1_9"/>
<dbReference type="Proteomes" id="UP000002527">
    <property type="component" value="Chromosome"/>
</dbReference>
<dbReference type="GO" id="GO:0000902">
    <property type="term" value="P:cell morphogenesis"/>
    <property type="evidence" value="ECO:0007669"/>
    <property type="project" value="InterPro"/>
</dbReference>
<dbReference type="GO" id="GO:0000917">
    <property type="term" value="P:division septum assembly"/>
    <property type="evidence" value="ECO:0007669"/>
    <property type="project" value="UniProtKB-KW"/>
</dbReference>
<dbReference type="GO" id="GO:1901891">
    <property type="term" value="P:regulation of cell septum assembly"/>
    <property type="evidence" value="ECO:0007669"/>
    <property type="project" value="InterPro"/>
</dbReference>
<dbReference type="FunFam" id="2.160.20.70:FF:000003">
    <property type="entry name" value="Probable septum site-determining protein MinC"/>
    <property type="match status" value="1"/>
</dbReference>
<dbReference type="FunFam" id="3.30.160.540:FF:000001">
    <property type="entry name" value="Probable septum site-determining protein MinC"/>
    <property type="match status" value="1"/>
</dbReference>
<dbReference type="Gene3D" id="2.160.20.70">
    <property type="match status" value="1"/>
</dbReference>
<dbReference type="Gene3D" id="3.30.160.540">
    <property type="match status" value="1"/>
</dbReference>
<dbReference type="HAMAP" id="MF_00267">
    <property type="entry name" value="MinC"/>
    <property type="match status" value="1"/>
</dbReference>
<dbReference type="InterPro" id="IPR016098">
    <property type="entry name" value="CAP/MinC_C"/>
</dbReference>
<dbReference type="InterPro" id="IPR013033">
    <property type="entry name" value="MinC"/>
</dbReference>
<dbReference type="InterPro" id="IPR036145">
    <property type="entry name" value="MinC_C_sf"/>
</dbReference>
<dbReference type="InterPro" id="IPR055219">
    <property type="entry name" value="MinC_N_1"/>
</dbReference>
<dbReference type="InterPro" id="IPR005526">
    <property type="entry name" value="Septum_form_inhib_MinC_C"/>
</dbReference>
<dbReference type="NCBIfam" id="TIGR01222">
    <property type="entry name" value="minC"/>
    <property type="match status" value="1"/>
</dbReference>
<dbReference type="PANTHER" id="PTHR34108">
    <property type="entry name" value="SEPTUM SITE-DETERMINING PROTEIN MINC"/>
    <property type="match status" value="1"/>
</dbReference>
<dbReference type="PANTHER" id="PTHR34108:SF1">
    <property type="entry name" value="SEPTUM SITE-DETERMINING PROTEIN MINC"/>
    <property type="match status" value="1"/>
</dbReference>
<dbReference type="Pfam" id="PF03775">
    <property type="entry name" value="MinC_C"/>
    <property type="match status" value="1"/>
</dbReference>
<dbReference type="Pfam" id="PF22642">
    <property type="entry name" value="MinC_N_1"/>
    <property type="match status" value="1"/>
</dbReference>
<dbReference type="SUPFAM" id="SSF63848">
    <property type="entry name" value="Cell-division inhibitor MinC, C-terminal domain"/>
    <property type="match status" value="1"/>
</dbReference>
<organism>
    <name type="scientific">Bacillus cereus (strain ATCC 10987 / NRS 248)</name>
    <dbReference type="NCBI Taxonomy" id="222523"/>
    <lineage>
        <taxon>Bacteria</taxon>
        <taxon>Bacillati</taxon>
        <taxon>Bacillota</taxon>
        <taxon>Bacilli</taxon>
        <taxon>Bacillales</taxon>
        <taxon>Bacillaceae</taxon>
        <taxon>Bacillus</taxon>
        <taxon>Bacillus cereus group</taxon>
    </lineage>
</organism>
<feature type="chain" id="PRO_0000189015" description="Probable septum site-determining protein MinC">
    <location>
        <begin position="1"/>
        <end position="228"/>
    </location>
</feature>
<gene>
    <name evidence="1" type="primary">minC</name>
    <name type="ordered locus">BCE_4541</name>
</gene>
<protein>
    <recommendedName>
        <fullName evidence="1">Probable septum site-determining protein MinC</fullName>
    </recommendedName>
</protein>
<comment type="function">
    <text evidence="1">Cell division inhibitor that blocks the formation of polar Z ring septums. Rapidly oscillates between the poles of the cell to destabilize FtsZ filaments that have formed before they mature into polar Z rings. Prevents FtsZ polymerization.</text>
</comment>
<comment type="subunit">
    <text evidence="1">Interacts with MinD and FtsZ.</text>
</comment>
<comment type="similarity">
    <text evidence="1">Belongs to the MinC family.</text>
</comment>